<proteinExistence type="evidence at protein level"/>
<protein>
    <recommendedName>
        <fullName>Anaphase-promoting complex subunit 1</fullName>
    </recommendedName>
    <alternativeName>
        <fullName>20S cyclosome/APC complex protein apc1</fullName>
    </alternativeName>
    <alternativeName>
        <fullName>Cell untimely torn protein 4</fullName>
    </alternativeName>
</protein>
<keyword id="KW-0131">Cell cycle</keyword>
<keyword id="KW-0132">Cell division</keyword>
<keyword id="KW-0498">Mitosis</keyword>
<keyword id="KW-1185">Reference proteome</keyword>
<keyword id="KW-0677">Repeat</keyword>
<keyword id="KW-0833">Ubl conjugation pathway</keyword>
<sequence>MLELKTNVIQDPELKDSLDLQENDRVEIIGDAVHYIVNDHLNRVFNYTVDQQKIHAALITTFASGKKAIVVILDDIGYVYYVGDNNNDSYIINVPFSTESAWSSPSGLYLQRHRSSDENLNTDLPHIFCLNDPLDELTLIKFDGKKILSLFDSIVYVVGEIVVTHNKKEKKLSFWRSRFIDPESDQSIKSSRNRRRESSFSREKNPDLTRSDSIHYTANTRLSEKFEEQGLAYSTIFSHIESFPITGSTSFDSILGNGVLVITTLVKELEKGYMMLFRLVRDRSPYFLDSLQLHAINLSAIKSKHLQKIVVLSSKGKVSLESPMSPSLPIEGTFRSFRVHGATLYLEDTDGVQRYISLDNRASNSLVKWCLSVIRYVLPLREYEIFYTGHLYALFAFKLSHDEAFISSILACFTFFSRDKVHVEPIEDCNEAYSLSSKFHFKKEILIASQLSSHLDYSTFKNYLMPLAITLHFISEELRLDSVVKPRKDQLVALLLQITTWLKWPRYCEYYNFDIAETFLSIPLSIQVDVEEPVGPTSILQWIIECLRSQSTVPFYGLESYGLPHSCSTMFPQTLSLMQLLDCLLNPNMTLQNLVEEMVRLGISRKRCERYPFGILCIIFTVLEIAAEEYSPNWESEELRLVNRLDVDSFLHPKTPKWVFNKQDQEVKEIKALTSTVTDSTLVDTQSFHPYKVVTDMIFREDRRLAEVNKLLNYSSQITIMTEHFDVDLSSVPMQQKVAQCICVRTLSVPIGAGMLTYGSKNPLPTEKVTPRLFNFTLHLHPGTLIIQPNKEFVTQELTEWPEFNVGVALGLSISKFSKEINTSWIMFNRPETLTAYHAGFLFGLGLNGHLKALATWHSFIYLTSKHDTTSIGLLLGLASSYLGSMDAKVTKLLSVHISALLPVGSNELNISPLTQTAGILGIGLLFHDSCHRRMSEVTMEEILASNESELKNEGYKLAAGFSLGLINLGRGSNLPGMSDLKLVSRLQVGISSQATFQSLEAGSPGAIMALTMIYMKTNDLEVAKKIDIPKSRYLLDFYRPDLILLRVAGKNLIMWDEVKADYEWVKYQIPDIMLSQFDLQEKKVLSSDDLLLYNVLAGICFSLGLRFAGTGNPKAKEILINFLDSFIRLCHLPAKTHDERVTAVTVIRCTQIVALSSSCVMAGYCDLDVLRRLRVLHGRMEPVNYGAQMATHMALGILSLGGGRYSLSRSNLAIAALLISFYPQFPRTTQDNRAHLQAARNLWALAVEERCIIPRNQDTKQPCIVPLNVVQKSGAVQKLEAPILLPPYDSISSVSTLGDKYWNLKIDLDNNSDYRELLRESQTLTLMPYDRTSSKEEPLNLFPKLKDTSSPLWNLVKTSRLFQSSNSPLNVASLQESNNKTSLGVKLLLSMDFDNLTRDRLLSLQILLQFFESCWTGVLLNKFHSRQYLFLSRDLVEDLSLRVWEYVYSHNHNEESV</sequence>
<name>APC1_SCHPO</name>
<accession>Q9URV2</accession>
<accession>O13457</accession>
<reference key="1">
    <citation type="journal article" date="1996" name="Nature">
        <title>20S cyclosome complex formation and proteolytic activity inhibited by the cAMP/PKA pathway.</title>
        <authorList>
            <person name="Yamashita Y.M."/>
            <person name="Nakaseko Y."/>
            <person name="Samejima I."/>
            <person name="Kumada K."/>
            <person name="Yamada H."/>
            <person name="Michaelson D."/>
            <person name="Yanagida M."/>
        </authorList>
    </citation>
    <scope>NUCLEOTIDE SEQUENCE [GENOMIC DNA]</scope>
    <scope>FUNCTION</scope>
</reference>
<reference key="2">
    <citation type="journal article" date="2002" name="Nature">
        <title>The genome sequence of Schizosaccharomyces pombe.</title>
        <authorList>
            <person name="Wood V."/>
            <person name="Gwilliam R."/>
            <person name="Rajandream M.A."/>
            <person name="Lyne M.H."/>
            <person name="Lyne R."/>
            <person name="Stewart A."/>
            <person name="Sgouros J.G."/>
            <person name="Peat N."/>
            <person name="Hayles J."/>
            <person name="Baker S.G."/>
            <person name="Basham D."/>
            <person name="Bowman S."/>
            <person name="Brooks K."/>
            <person name="Brown D."/>
            <person name="Brown S."/>
            <person name="Chillingworth T."/>
            <person name="Churcher C.M."/>
            <person name="Collins M."/>
            <person name="Connor R."/>
            <person name="Cronin A."/>
            <person name="Davis P."/>
            <person name="Feltwell T."/>
            <person name="Fraser A."/>
            <person name="Gentles S."/>
            <person name="Goble A."/>
            <person name="Hamlin N."/>
            <person name="Harris D.E."/>
            <person name="Hidalgo J."/>
            <person name="Hodgson G."/>
            <person name="Holroyd S."/>
            <person name="Hornsby T."/>
            <person name="Howarth S."/>
            <person name="Huckle E.J."/>
            <person name="Hunt S."/>
            <person name="Jagels K."/>
            <person name="James K.D."/>
            <person name="Jones L."/>
            <person name="Jones M."/>
            <person name="Leather S."/>
            <person name="McDonald S."/>
            <person name="McLean J."/>
            <person name="Mooney P."/>
            <person name="Moule S."/>
            <person name="Mungall K.L."/>
            <person name="Murphy L.D."/>
            <person name="Niblett D."/>
            <person name="Odell C."/>
            <person name="Oliver K."/>
            <person name="O'Neil S."/>
            <person name="Pearson D."/>
            <person name="Quail M.A."/>
            <person name="Rabbinowitsch E."/>
            <person name="Rutherford K.M."/>
            <person name="Rutter S."/>
            <person name="Saunders D."/>
            <person name="Seeger K."/>
            <person name="Sharp S."/>
            <person name="Skelton J."/>
            <person name="Simmonds M.N."/>
            <person name="Squares R."/>
            <person name="Squares S."/>
            <person name="Stevens K."/>
            <person name="Taylor K."/>
            <person name="Taylor R.G."/>
            <person name="Tivey A."/>
            <person name="Walsh S.V."/>
            <person name="Warren T."/>
            <person name="Whitehead S."/>
            <person name="Woodward J.R."/>
            <person name="Volckaert G."/>
            <person name="Aert R."/>
            <person name="Robben J."/>
            <person name="Grymonprez B."/>
            <person name="Weltjens I."/>
            <person name="Vanstreels E."/>
            <person name="Rieger M."/>
            <person name="Schaefer M."/>
            <person name="Mueller-Auer S."/>
            <person name="Gabel C."/>
            <person name="Fuchs M."/>
            <person name="Duesterhoeft A."/>
            <person name="Fritzc C."/>
            <person name="Holzer E."/>
            <person name="Moestl D."/>
            <person name="Hilbert H."/>
            <person name="Borzym K."/>
            <person name="Langer I."/>
            <person name="Beck A."/>
            <person name="Lehrach H."/>
            <person name="Reinhardt R."/>
            <person name="Pohl T.M."/>
            <person name="Eger P."/>
            <person name="Zimmermann W."/>
            <person name="Wedler H."/>
            <person name="Wambutt R."/>
            <person name="Purnelle B."/>
            <person name="Goffeau A."/>
            <person name="Cadieu E."/>
            <person name="Dreano S."/>
            <person name="Gloux S."/>
            <person name="Lelaure V."/>
            <person name="Mottier S."/>
            <person name="Galibert F."/>
            <person name="Aves S.J."/>
            <person name="Xiang Z."/>
            <person name="Hunt C."/>
            <person name="Moore K."/>
            <person name="Hurst S.M."/>
            <person name="Lucas M."/>
            <person name="Rochet M."/>
            <person name="Gaillardin C."/>
            <person name="Tallada V.A."/>
            <person name="Garzon A."/>
            <person name="Thode G."/>
            <person name="Daga R.R."/>
            <person name="Cruzado L."/>
            <person name="Jimenez J."/>
            <person name="Sanchez M."/>
            <person name="del Rey F."/>
            <person name="Benito J."/>
            <person name="Dominguez A."/>
            <person name="Revuelta J.L."/>
            <person name="Moreno S."/>
            <person name="Armstrong J."/>
            <person name="Forsburg S.L."/>
            <person name="Cerutti L."/>
            <person name="Lowe T."/>
            <person name="McCombie W.R."/>
            <person name="Paulsen I."/>
            <person name="Potashkin J."/>
            <person name="Shpakovski G.V."/>
            <person name="Ussery D."/>
            <person name="Barrell B.G."/>
            <person name="Nurse P."/>
        </authorList>
    </citation>
    <scope>NUCLEOTIDE SEQUENCE [LARGE SCALE GENOMIC DNA]</scope>
    <source>
        <strain>972 / ATCC 24843</strain>
    </source>
</reference>
<reference key="3">
    <citation type="journal article" date="2002" name="Curr. Biol.">
        <title>Proteomics analysis identifies new components of the fission and budding yeast anaphase-promoting complexes.</title>
        <authorList>
            <person name="Yoon H.-J."/>
            <person name="Feoktistova A."/>
            <person name="Wolfe B.A."/>
            <person name="Jennings J.L."/>
            <person name="Link A.J."/>
            <person name="Gould K.L."/>
        </authorList>
    </citation>
    <scope>SUBUNIT</scope>
</reference>
<dbReference type="EMBL" id="D85196">
    <property type="protein sequence ID" value="BAA22618.1"/>
    <property type="molecule type" value="Genomic_DNA"/>
</dbReference>
<dbReference type="EMBL" id="CU329671">
    <property type="protein sequence ID" value="CAB53725.1"/>
    <property type="molecule type" value="Genomic_DNA"/>
</dbReference>
<dbReference type="PIR" id="T39266">
    <property type="entry name" value="T39266"/>
</dbReference>
<dbReference type="PIR" id="T51995">
    <property type="entry name" value="T51995"/>
</dbReference>
<dbReference type="RefSeq" id="NP_595158.1">
    <property type="nucleotide sequence ID" value="NM_001021067.2"/>
</dbReference>
<dbReference type="SMR" id="Q9URV2"/>
<dbReference type="BioGRID" id="276194">
    <property type="interactions" value="26"/>
</dbReference>
<dbReference type="ComplexPortal" id="CPX-763">
    <property type="entry name" value="Anaphase-promoting complex"/>
</dbReference>
<dbReference type="ComplexPortal" id="CPX-764">
    <property type="entry name" value="Anaphase-promoting complex, slp1 variant"/>
</dbReference>
<dbReference type="ComplexPortal" id="CPX-765">
    <property type="entry name" value="Anaphase-promoting complex, srw1 variant"/>
</dbReference>
<dbReference type="ComplexPortal" id="CPX-766">
    <property type="entry name" value="Anaphase-promoting complex, mfr1 variant"/>
</dbReference>
<dbReference type="FunCoup" id="Q9URV2">
    <property type="interactions" value="761"/>
</dbReference>
<dbReference type="IntAct" id="Q9URV2">
    <property type="interactions" value="6"/>
</dbReference>
<dbReference type="STRING" id="284812.Q9URV2"/>
<dbReference type="iPTMnet" id="Q9URV2"/>
<dbReference type="PaxDb" id="4896-SPBC106.09.1"/>
<dbReference type="EnsemblFungi" id="SPBC106.09.1">
    <property type="protein sequence ID" value="SPBC106.09.1:pep"/>
    <property type="gene ID" value="SPBC106.09"/>
</dbReference>
<dbReference type="GeneID" id="2539639"/>
<dbReference type="KEGG" id="spo:2539639"/>
<dbReference type="PomBase" id="SPBC106.09">
    <property type="gene designation" value="cut4"/>
</dbReference>
<dbReference type="VEuPathDB" id="FungiDB:SPBC106.09"/>
<dbReference type="eggNOG" id="KOG1858">
    <property type="taxonomic scope" value="Eukaryota"/>
</dbReference>
<dbReference type="HOGENOM" id="CLU_000746_0_0_1"/>
<dbReference type="InParanoid" id="Q9URV2"/>
<dbReference type="OMA" id="CHRRMSE"/>
<dbReference type="PhylomeDB" id="Q9URV2"/>
<dbReference type="Reactome" id="R-SPO-983168">
    <property type="pathway name" value="Antigen processing: Ubiquitination &amp; Proteasome degradation"/>
</dbReference>
<dbReference type="PRO" id="PR:Q9URV2"/>
<dbReference type="Proteomes" id="UP000002485">
    <property type="component" value="Chromosome II"/>
</dbReference>
<dbReference type="GO" id="GO:0005680">
    <property type="term" value="C:anaphase-promoting complex"/>
    <property type="evidence" value="ECO:0000314"/>
    <property type="project" value="PomBase"/>
</dbReference>
<dbReference type="GO" id="GO:0005829">
    <property type="term" value="C:cytosol"/>
    <property type="evidence" value="ECO:0007005"/>
    <property type="project" value="PomBase"/>
</dbReference>
<dbReference type="GO" id="GO:0005634">
    <property type="term" value="C:nucleus"/>
    <property type="evidence" value="ECO:0007005"/>
    <property type="project" value="PomBase"/>
</dbReference>
<dbReference type="GO" id="GO:0005721">
    <property type="term" value="C:pericentric heterochromatin"/>
    <property type="evidence" value="ECO:0000314"/>
    <property type="project" value="PomBase"/>
</dbReference>
<dbReference type="GO" id="GO:0060090">
    <property type="term" value="F:molecular adaptor activity"/>
    <property type="evidence" value="ECO:0000318"/>
    <property type="project" value="GO_Central"/>
</dbReference>
<dbReference type="GO" id="GO:0070628">
    <property type="term" value="F:proteasome binding"/>
    <property type="evidence" value="ECO:0000353"/>
    <property type="project" value="PomBase"/>
</dbReference>
<dbReference type="GO" id="GO:0031145">
    <property type="term" value="P:anaphase-promoting complex-dependent catabolic process"/>
    <property type="evidence" value="ECO:0000315"/>
    <property type="project" value="PomBase"/>
</dbReference>
<dbReference type="GO" id="GO:0051301">
    <property type="term" value="P:cell division"/>
    <property type="evidence" value="ECO:0007669"/>
    <property type="project" value="UniProtKB-KW"/>
</dbReference>
<dbReference type="GO" id="GO:0007091">
    <property type="term" value="P:metaphase/anaphase transition of mitotic cell cycle"/>
    <property type="evidence" value="ECO:0000318"/>
    <property type="project" value="GO_Central"/>
</dbReference>
<dbReference type="GO" id="GO:0051306">
    <property type="term" value="P:mitotic sister chromatid separation"/>
    <property type="evidence" value="ECO:0000305"/>
    <property type="project" value="PomBase"/>
</dbReference>
<dbReference type="GO" id="GO:0070979">
    <property type="term" value="P:protein K11-linked ubiquitination"/>
    <property type="evidence" value="ECO:0000318"/>
    <property type="project" value="GO_Central"/>
</dbReference>
<dbReference type="FunFam" id="1.25.10.10:FF:000400">
    <property type="entry name" value="20S cyclosome subunit (APC1/BimE), putative"/>
    <property type="match status" value="1"/>
</dbReference>
<dbReference type="Gene3D" id="1.25.10.10">
    <property type="entry name" value="Leucine-rich Repeat Variant"/>
    <property type="match status" value="2"/>
</dbReference>
<dbReference type="InterPro" id="IPR024990">
    <property type="entry name" value="Apc1"/>
</dbReference>
<dbReference type="InterPro" id="IPR048971">
    <property type="entry name" value="Apc1_3rd"/>
</dbReference>
<dbReference type="InterPro" id="IPR011989">
    <property type="entry name" value="ARM-like"/>
</dbReference>
<dbReference type="PANTHER" id="PTHR12827:SF3">
    <property type="entry name" value="ANAPHASE-PROMOTING COMPLEX SUBUNIT 1"/>
    <property type="match status" value="1"/>
</dbReference>
<dbReference type="PANTHER" id="PTHR12827">
    <property type="entry name" value="MEIOTIC CHECKPOINT REGULATOR TSG24 FAMILY MEMBER"/>
    <property type="match status" value="1"/>
</dbReference>
<dbReference type="Pfam" id="PF21282">
    <property type="entry name" value="APC1_3rd"/>
    <property type="match status" value="1"/>
</dbReference>
<gene>
    <name type="primary">cut4</name>
    <name type="synonym">apc1</name>
    <name type="ORF">SPBC106.09</name>
</gene>
<comment type="function">
    <text evidence="3">Component of the anaphase-promoting complex/cyclosome (APC/C), a cell cycle-regulated E3 ubiquitin-protein ligase complex that controls progression through mitosis and the G1 phase of the cell cycle. The APC/C is thought to confer substrate specificity and, in the presence of ubiquitin-conjugating E2 enzymes, it catalyzes the formation of protein-ubiquitin conjugates that are subsequently degraded by the 26S proteasome. Mutations to this protein prevent the exit from mitosis.</text>
</comment>
<comment type="subunit">
    <text evidence="2">The APC/C is composed of at least 13 subunits: apc1, apc2, nuc2, apc4, apc5, cut9, apc8, apc10, apc11, hcn1, apc13, apc14 and apc15.</text>
</comment>
<comment type="similarity">
    <text evidence="4">Belongs to the APC1 family.</text>
</comment>
<feature type="chain" id="PRO_0000215874" description="Anaphase-promoting complex subunit 1">
    <location>
        <begin position="1"/>
        <end position="1458"/>
    </location>
</feature>
<feature type="repeat" description="PC 1">
    <location>
        <begin position="873"/>
        <end position="895"/>
    </location>
</feature>
<feature type="repeat" description="PC 2">
    <location>
        <begin position="959"/>
        <end position="982"/>
    </location>
</feature>
<feature type="repeat" description="PC 3">
    <location>
        <begin position="1006"/>
        <end position="1024"/>
    </location>
</feature>
<feature type="repeat" description="PC 4">
    <location>
        <begin position="1099"/>
        <end position="1124"/>
    </location>
</feature>
<feature type="region of interest" description="Disordered" evidence="1">
    <location>
        <begin position="186"/>
        <end position="210"/>
    </location>
</feature>
<feature type="compositionally biased region" description="Basic and acidic residues" evidence="1">
    <location>
        <begin position="196"/>
        <end position="210"/>
    </location>
</feature>
<feature type="sequence conflict" description="In Ref. 1; BAA22618." evidence="4" ref="1">
    <original>A</original>
    <variation>V</variation>
    <location>
        <position position="995"/>
    </location>
</feature>
<organism>
    <name type="scientific">Schizosaccharomyces pombe (strain 972 / ATCC 24843)</name>
    <name type="common">Fission yeast</name>
    <dbReference type="NCBI Taxonomy" id="284812"/>
    <lineage>
        <taxon>Eukaryota</taxon>
        <taxon>Fungi</taxon>
        <taxon>Dikarya</taxon>
        <taxon>Ascomycota</taxon>
        <taxon>Taphrinomycotina</taxon>
        <taxon>Schizosaccharomycetes</taxon>
        <taxon>Schizosaccharomycetales</taxon>
        <taxon>Schizosaccharomycetaceae</taxon>
        <taxon>Schizosaccharomyces</taxon>
    </lineage>
</organism>
<evidence type="ECO:0000256" key="1">
    <source>
        <dbReference type="SAM" id="MobiDB-lite"/>
    </source>
</evidence>
<evidence type="ECO:0000269" key="2">
    <source>
    </source>
</evidence>
<evidence type="ECO:0000269" key="3">
    <source>
    </source>
</evidence>
<evidence type="ECO:0000305" key="4"/>